<reference key="1">
    <citation type="journal article" date="1992" name="Mol. Gen. Genet.">
        <title>Chloroplast DNA of black pine retains a residual inverted repeat lacking rRNA genes: nucleotide sequences of trnQ, trnK, psbA, trnI and trnH and the absence of rps16.</title>
        <authorList>
            <person name="Tsudzuki J."/>
            <person name="Nakashima K."/>
            <person name="Tsudzuki T."/>
            <person name="Hiratsuka J."/>
            <person name="Shibata M."/>
            <person name="Wakasugi T."/>
            <person name="Sugiura M."/>
        </authorList>
    </citation>
    <scope>NUCLEOTIDE SEQUENCE [GENOMIC DNA]</scope>
</reference>
<reference key="2">
    <citation type="journal article" date="1994" name="Proc. Natl. Acad. Sci. U.S.A.">
        <title>Loss of all ndh genes as determined by sequencing the entire chloroplast genome of the black pine Pinus thunbergii.</title>
        <authorList>
            <person name="Wakasugi T."/>
            <person name="Tsudzuki J."/>
            <person name="Ito S."/>
            <person name="Nakashima K."/>
            <person name="Tsudzuki T."/>
            <person name="Sugiura M."/>
        </authorList>
    </citation>
    <scope>NUCLEOTIDE SEQUENCE [LARGE SCALE GENOMIC DNA]</scope>
</reference>
<dbReference type="EC" id="1.10.3.9" evidence="1"/>
<dbReference type="EMBL" id="D11467">
    <property type="protein sequence ID" value="BAA02024.1"/>
    <property type="molecule type" value="Genomic_DNA"/>
</dbReference>
<dbReference type="EMBL" id="D17510">
    <property type="protein sequence ID" value="BAA04462.1"/>
    <property type="molecule type" value="Genomic_DNA"/>
</dbReference>
<dbReference type="PIR" id="S29327">
    <property type="entry name" value="S29327"/>
</dbReference>
<dbReference type="RefSeq" id="NP_042347.1">
    <property type="nucleotide sequence ID" value="NC_001631.1"/>
</dbReference>
<dbReference type="SMR" id="P69551"/>
<dbReference type="GeneID" id="809093"/>
<dbReference type="GO" id="GO:0009535">
    <property type="term" value="C:chloroplast thylakoid membrane"/>
    <property type="evidence" value="ECO:0007669"/>
    <property type="project" value="UniProtKB-SubCell"/>
</dbReference>
<dbReference type="GO" id="GO:0009523">
    <property type="term" value="C:photosystem II"/>
    <property type="evidence" value="ECO:0007669"/>
    <property type="project" value="UniProtKB-KW"/>
</dbReference>
<dbReference type="GO" id="GO:0016168">
    <property type="term" value="F:chlorophyll binding"/>
    <property type="evidence" value="ECO:0007669"/>
    <property type="project" value="UniProtKB-UniRule"/>
</dbReference>
<dbReference type="GO" id="GO:0045156">
    <property type="term" value="F:electron transporter, transferring electrons within the cyclic electron transport pathway of photosynthesis activity"/>
    <property type="evidence" value="ECO:0007669"/>
    <property type="project" value="InterPro"/>
</dbReference>
<dbReference type="GO" id="GO:0005506">
    <property type="term" value="F:iron ion binding"/>
    <property type="evidence" value="ECO:0007669"/>
    <property type="project" value="UniProtKB-UniRule"/>
</dbReference>
<dbReference type="GO" id="GO:0016682">
    <property type="term" value="F:oxidoreductase activity, acting on diphenols and related substances as donors, oxygen as acceptor"/>
    <property type="evidence" value="ECO:0007669"/>
    <property type="project" value="UniProtKB-UniRule"/>
</dbReference>
<dbReference type="GO" id="GO:0010242">
    <property type="term" value="F:oxygen evolving activity"/>
    <property type="evidence" value="ECO:0007669"/>
    <property type="project" value="UniProtKB-EC"/>
</dbReference>
<dbReference type="GO" id="GO:0009772">
    <property type="term" value="P:photosynthetic electron transport in photosystem II"/>
    <property type="evidence" value="ECO:0007669"/>
    <property type="project" value="InterPro"/>
</dbReference>
<dbReference type="GO" id="GO:0009635">
    <property type="term" value="P:response to herbicide"/>
    <property type="evidence" value="ECO:0007669"/>
    <property type="project" value="UniProtKB-KW"/>
</dbReference>
<dbReference type="CDD" id="cd09289">
    <property type="entry name" value="Photosystem-II_D1"/>
    <property type="match status" value="1"/>
</dbReference>
<dbReference type="FunFam" id="1.20.85.10:FF:000002">
    <property type="entry name" value="Photosystem II protein D1"/>
    <property type="match status" value="1"/>
</dbReference>
<dbReference type="Gene3D" id="1.20.85.10">
    <property type="entry name" value="Photosystem II protein D1-like"/>
    <property type="match status" value="1"/>
</dbReference>
<dbReference type="HAMAP" id="MF_01379">
    <property type="entry name" value="PSII_PsbA_D1"/>
    <property type="match status" value="1"/>
</dbReference>
<dbReference type="InterPro" id="IPR055266">
    <property type="entry name" value="D1/D2"/>
</dbReference>
<dbReference type="InterPro" id="IPR036854">
    <property type="entry name" value="Photo_II_D1/D2_sf"/>
</dbReference>
<dbReference type="InterPro" id="IPR000484">
    <property type="entry name" value="Photo_RC_L/M"/>
</dbReference>
<dbReference type="InterPro" id="IPR055265">
    <property type="entry name" value="Photo_RC_L/M_CS"/>
</dbReference>
<dbReference type="InterPro" id="IPR005867">
    <property type="entry name" value="PSII_D1"/>
</dbReference>
<dbReference type="NCBIfam" id="TIGR01151">
    <property type="entry name" value="psbA"/>
    <property type="match status" value="1"/>
</dbReference>
<dbReference type="PANTHER" id="PTHR33149:SF12">
    <property type="entry name" value="PHOTOSYSTEM II D2 PROTEIN"/>
    <property type="match status" value="1"/>
</dbReference>
<dbReference type="PANTHER" id="PTHR33149">
    <property type="entry name" value="PHOTOSYSTEM II PROTEIN D1"/>
    <property type="match status" value="1"/>
</dbReference>
<dbReference type="Pfam" id="PF00124">
    <property type="entry name" value="Photo_RC"/>
    <property type="match status" value="1"/>
</dbReference>
<dbReference type="PRINTS" id="PR00256">
    <property type="entry name" value="REACTNCENTRE"/>
</dbReference>
<dbReference type="SUPFAM" id="SSF81483">
    <property type="entry name" value="Bacterial photosystem II reaction centre, L and M subunits"/>
    <property type="match status" value="1"/>
</dbReference>
<dbReference type="PROSITE" id="PS00244">
    <property type="entry name" value="REACTION_CENTER"/>
    <property type="match status" value="1"/>
</dbReference>
<gene>
    <name evidence="1" type="primary">psbA</name>
</gene>
<keyword id="KW-0007">Acetylation</keyword>
<keyword id="KW-0106">Calcium</keyword>
<keyword id="KW-0148">Chlorophyll</keyword>
<keyword id="KW-0150">Chloroplast</keyword>
<keyword id="KW-0157">Chromophore</keyword>
<keyword id="KW-0249">Electron transport</keyword>
<keyword id="KW-0359">Herbicide resistance</keyword>
<keyword id="KW-0408">Iron</keyword>
<keyword id="KW-0460">Magnesium</keyword>
<keyword id="KW-0464">Manganese</keyword>
<keyword id="KW-0472">Membrane</keyword>
<keyword id="KW-0479">Metal-binding</keyword>
<keyword id="KW-0560">Oxidoreductase</keyword>
<keyword id="KW-0597">Phosphoprotein</keyword>
<keyword id="KW-0602">Photosynthesis</keyword>
<keyword id="KW-0604">Photosystem II</keyword>
<keyword id="KW-0934">Plastid</keyword>
<keyword id="KW-0793">Thylakoid</keyword>
<keyword id="KW-0812">Transmembrane</keyword>
<keyword id="KW-1133">Transmembrane helix</keyword>
<keyword id="KW-0813">Transport</keyword>
<sequence length="353" mass="38808">MTAIIERRESANLWSRFCDWITSTENRLYIGWFGVLMIPTLLTATSVFIIAFIAAPPVDIDGIREPVSGSLLYGNNIISGAIIPTSAAIGLHFYPIWEAASVDEWLYNGGPYELIVLHFLLGVACYMGREWELSFRLGMRPWIAVAYSAPVAAATAVFLIYPIGQGSFSDGMPLGISGTFNFMIVFQAEHNILMHPFHMLGVAGVFGGSLFSAMHGSLVTSSLIRETTENQSANAGYKFGQEEETYNIVAAHGYFGRLIFQYASFNNSRSLHFFLAAWPVAGIWFTALGISTMAFNLNGFNFNQSVVDSQGRVINTWADIINRANLGMEVMHERNAHNFPLDLAAVESISIGG</sequence>
<feature type="initiator methionine" description="Removed" evidence="1">
    <location>
        <position position="1"/>
    </location>
</feature>
<feature type="chain" id="PRO_0000090465" description="Photosystem II protein D1" evidence="1">
    <location>
        <begin position="2"/>
        <end position="344"/>
    </location>
</feature>
<feature type="propeptide" id="PRO_0000316477" evidence="1">
    <location>
        <begin position="345"/>
        <end position="353"/>
    </location>
</feature>
<feature type="transmembrane region" description="Helical" evidence="1">
    <location>
        <begin position="29"/>
        <end position="46"/>
    </location>
</feature>
<feature type="transmembrane region" description="Helical" evidence="1">
    <location>
        <begin position="118"/>
        <end position="133"/>
    </location>
</feature>
<feature type="transmembrane region" description="Helical" evidence="1">
    <location>
        <begin position="142"/>
        <end position="156"/>
    </location>
</feature>
<feature type="transmembrane region" description="Helical" evidence="1">
    <location>
        <begin position="197"/>
        <end position="218"/>
    </location>
</feature>
<feature type="transmembrane region" description="Helical" evidence="1">
    <location>
        <begin position="274"/>
        <end position="288"/>
    </location>
</feature>
<feature type="binding site" description="axial binding residue" evidence="1">
    <location>
        <position position="118"/>
    </location>
    <ligand>
        <name>chlorophyll a</name>
        <dbReference type="ChEBI" id="CHEBI:58416"/>
        <label>ChlzD1</label>
    </ligand>
    <ligandPart>
        <name>Mg</name>
        <dbReference type="ChEBI" id="CHEBI:25107"/>
    </ligandPart>
</feature>
<feature type="binding site" evidence="1">
    <location>
        <position position="126"/>
    </location>
    <ligand>
        <name>pheophytin a</name>
        <dbReference type="ChEBI" id="CHEBI:136840"/>
        <label>D1</label>
    </ligand>
</feature>
<feature type="binding site" evidence="1">
    <location>
        <position position="170"/>
    </location>
    <ligand>
        <name>[CaMn4O5] cluster</name>
        <dbReference type="ChEBI" id="CHEBI:189552"/>
    </ligand>
</feature>
<feature type="binding site" evidence="1">
    <location>
        <position position="189"/>
    </location>
    <ligand>
        <name>[CaMn4O5] cluster</name>
        <dbReference type="ChEBI" id="CHEBI:189552"/>
    </ligand>
</feature>
<feature type="binding site" description="axial binding residue" evidence="1">
    <location>
        <position position="198"/>
    </location>
    <ligand>
        <name>chlorophyll a</name>
        <dbReference type="ChEBI" id="CHEBI:58416"/>
        <label>PD1</label>
    </ligand>
    <ligandPart>
        <name>Mg</name>
        <dbReference type="ChEBI" id="CHEBI:25107"/>
    </ligandPart>
</feature>
<feature type="binding site" evidence="1">
    <location>
        <position position="215"/>
    </location>
    <ligand>
        <name>a quinone</name>
        <dbReference type="ChEBI" id="CHEBI:132124"/>
        <label>B</label>
    </ligand>
</feature>
<feature type="binding site" evidence="1">
    <location>
        <position position="215"/>
    </location>
    <ligand>
        <name>Fe cation</name>
        <dbReference type="ChEBI" id="CHEBI:24875"/>
        <note>ligand shared with heterodimeric partner</note>
    </ligand>
</feature>
<feature type="binding site" evidence="1">
    <location>
        <begin position="264"/>
        <end position="265"/>
    </location>
    <ligand>
        <name>a quinone</name>
        <dbReference type="ChEBI" id="CHEBI:132124"/>
        <label>B</label>
    </ligand>
</feature>
<feature type="binding site" evidence="1">
    <location>
        <position position="272"/>
    </location>
    <ligand>
        <name>Fe cation</name>
        <dbReference type="ChEBI" id="CHEBI:24875"/>
        <note>ligand shared with heterodimeric partner</note>
    </ligand>
</feature>
<feature type="binding site" evidence="1">
    <location>
        <position position="332"/>
    </location>
    <ligand>
        <name>[CaMn4O5] cluster</name>
        <dbReference type="ChEBI" id="CHEBI:189552"/>
    </ligand>
</feature>
<feature type="binding site" evidence="1">
    <location>
        <position position="333"/>
    </location>
    <ligand>
        <name>[CaMn4O5] cluster</name>
        <dbReference type="ChEBI" id="CHEBI:189552"/>
    </ligand>
</feature>
<feature type="binding site" evidence="1">
    <location>
        <position position="342"/>
    </location>
    <ligand>
        <name>[CaMn4O5] cluster</name>
        <dbReference type="ChEBI" id="CHEBI:189552"/>
    </ligand>
</feature>
<feature type="binding site" evidence="1">
    <location>
        <position position="344"/>
    </location>
    <ligand>
        <name>[CaMn4O5] cluster</name>
        <dbReference type="ChEBI" id="CHEBI:189552"/>
    </ligand>
</feature>
<feature type="site" description="Tyrosine radical intermediate" evidence="1">
    <location>
        <position position="161"/>
    </location>
</feature>
<feature type="site" description="Stabilizes free radical intermediate" evidence="1">
    <location>
        <position position="190"/>
    </location>
</feature>
<feature type="site" description="Cleavage; by CTPA" evidence="1">
    <location>
        <begin position="344"/>
        <end position="345"/>
    </location>
</feature>
<feature type="modified residue" description="N-acetylthreonine" evidence="1">
    <location>
        <position position="2"/>
    </location>
</feature>
<feature type="modified residue" description="Phosphothreonine" evidence="1">
    <location>
        <position position="2"/>
    </location>
</feature>
<proteinExistence type="inferred from homology"/>
<geneLocation type="chloroplast"/>
<organism>
    <name type="scientific">Pinus thunbergii</name>
    <name type="common">Japanese black pine</name>
    <name type="synonym">Pinus thunbergiana</name>
    <dbReference type="NCBI Taxonomy" id="3350"/>
    <lineage>
        <taxon>Eukaryota</taxon>
        <taxon>Viridiplantae</taxon>
        <taxon>Streptophyta</taxon>
        <taxon>Embryophyta</taxon>
        <taxon>Tracheophyta</taxon>
        <taxon>Spermatophyta</taxon>
        <taxon>Pinopsida</taxon>
        <taxon>Pinidae</taxon>
        <taxon>Conifers I</taxon>
        <taxon>Pinales</taxon>
        <taxon>Pinaceae</taxon>
        <taxon>Pinus</taxon>
        <taxon>Pinus subgen. Pinus</taxon>
    </lineage>
</organism>
<evidence type="ECO:0000255" key="1">
    <source>
        <dbReference type="HAMAP-Rule" id="MF_01379"/>
    </source>
</evidence>
<accession>P69551</accession>
<accession>P24684</accession>
<comment type="function">
    <text evidence="1">Photosystem II (PSII) is a light-driven water:plastoquinone oxidoreductase that uses light energy to abstract electrons from H(2)O, generating O(2) and a proton gradient subsequently used for ATP formation. It consists of a core antenna complex that captures photons, and an electron transfer chain that converts photonic excitation into a charge separation. The D1/D2 (PsbA/PsbD) reaction center heterodimer binds P680, the primary electron donor of PSII as well as several subsequent electron acceptors.</text>
</comment>
<comment type="catalytic activity">
    <reaction evidence="1">
        <text>2 a plastoquinone + 4 hnu + 2 H2O = 2 a plastoquinol + O2</text>
        <dbReference type="Rhea" id="RHEA:36359"/>
        <dbReference type="Rhea" id="RHEA-COMP:9561"/>
        <dbReference type="Rhea" id="RHEA-COMP:9562"/>
        <dbReference type="ChEBI" id="CHEBI:15377"/>
        <dbReference type="ChEBI" id="CHEBI:15379"/>
        <dbReference type="ChEBI" id="CHEBI:17757"/>
        <dbReference type="ChEBI" id="CHEBI:30212"/>
        <dbReference type="ChEBI" id="CHEBI:62192"/>
        <dbReference type="EC" id="1.10.3.9"/>
    </reaction>
</comment>
<comment type="cofactor">
    <text evidence="1">The D1/D2 heterodimer binds P680, chlorophylls that are the primary electron donor of PSII, and subsequent electron acceptors. It shares a non-heme iron and each subunit binds pheophytin, quinone, additional chlorophylls, carotenoids and lipids. D1 provides most of the ligands for the Mn4-Ca-O5 cluster of the oxygen-evolving complex (OEC). There is also a Cl(-1) ion associated with D1 and D2, which is required for oxygen evolution. The PSII complex binds additional chlorophylls, carotenoids and specific lipids.</text>
</comment>
<comment type="subunit">
    <text evidence="1">PSII is composed of 1 copy each of membrane proteins PsbA, PsbB, PsbC, PsbD, PsbE, PsbF, PsbH, PsbI, PsbJ, PsbK, PsbL, PsbM, PsbT, PsbX, PsbY, PsbZ, Psb30/Ycf12, at least 3 peripheral proteins of the oxygen-evolving complex and a large number of cofactors. It forms dimeric complexes.</text>
</comment>
<comment type="subcellular location">
    <subcellularLocation>
        <location evidence="1">Plastid</location>
        <location evidence="1">Chloroplast thylakoid membrane</location>
        <topology evidence="1">Multi-pass membrane protein</topology>
    </subcellularLocation>
</comment>
<comment type="PTM">
    <text evidence="1">Tyr-161 forms a radical intermediate that is referred to as redox-active TyrZ, YZ or Y-Z.</text>
</comment>
<comment type="PTM">
    <text evidence="1">C-terminally processed by CTPA; processing is essential to allow assembly of the oxygen-evolving complex and thus photosynthetic growth.</text>
</comment>
<comment type="miscellaneous">
    <text evidence="1">2 of the reaction center chlorophylls (ChlD1 and ChlD2) are entirely coordinated by water.</text>
</comment>
<comment type="miscellaneous">
    <text evidence="1">Herbicides such as atrazine, BNT, diuron or ioxynil bind in the Q(B) binding site and block subsequent electron transfer.</text>
</comment>
<comment type="similarity">
    <text evidence="1">Belongs to the reaction center PufL/M/PsbA/D family.</text>
</comment>
<name>PSBA_PINTH</name>
<protein>
    <recommendedName>
        <fullName evidence="1">Photosystem II protein D1</fullName>
        <shortName evidence="1">PSII D1 protein</shortName>
        <ecNumber evidence="1">1.10.3.9</ecNumber>
    </recommendedName>
    <alternativeName>
        <fullName evidence="1">Photosystem II Q(B) protein</fullName>
    </alternativeName>
</protein>